<feature type="chain" id="PRO_0000245263" description="Protein Hikeshi">
    <location>
        <begin position="1"/>
        <end position="197"/>
    </location>
</feature>
<feature type="region of interest" description="Required for F-X-F-G repeats-nucleoporins recognition and nuclear import" evidence="2">
    <location>
        <begin position="18"/>
        <end position="55"/>
    </location>
</feature>
<feature type="region of interest" description="Flexible linker region involved in nuclear import of HSP70 proteins" evidence="2">
    <location>
        <begin position="124"/>
        <end position="134"/>
    </location>
</feature>
<feature type="splice variant" id="VSP_043955" description="In isoform 2." evidence="6">
    <location>
        <begin position="1"/>
        <end position="39"/>
    </location>
</feature>
<feature type="sequence conflict" description="In Ref. 2; BAB28072." evidence="6" ref="2">
    <original>T</original>
    <variation>A</variation>
    <location>
        <position position="125"/>
    </location>
</feature>
<gene>
    <name evidence="7" type="primary">Hikeshi</name>
    <name evidence="5" type="synonym">L7rn6</name>
</gene>
<comment type="function">
    <text evidence="1">Acts as a specific nuclear import carrier for HSP70 proteins following heat-shock stress: acts by mediating the nucleoporin-dependent translocation of ATP-bound HSP70 proteins into the nucleus. HSP70 proteins import is required to protect cells from heat shock damages. Does not translocate ADP-bound HSP70 proteins into the nucleus (By similarity). May also be indirectly required for organization and/or function of the secretory apparatus in Club cells in lung.</text>
</comment>
<comment type="subunit">
    <text evidence="2">Forms an asymmetric homodimer; required for binding and nuclear import of HSP70 proteins. Interacts with ATP-bound HSP70 proteins. Interacts with NUP62 and NUP153 (via F-X-F-G repeats). Interacts with HSPA8.</text>
</comment>
<comment type="subcellular location">
    <subcellularLocation>
        <location evidence="3">Cytoplasm</location>
    </subcellularLocation>
    <subcellularLocation>
        <location evidence="2">Cytoplasm</location>
        <location evidence="2">Cytosol</location>
    </subcellularLocation>
    <subcellularLocation>
        <location evidence="2">Nucleus</location>
    </subcellularLocation>
</comment>
<comment type="alternative products">
    <event type="alternative splicing"/>
    <isoform>
        <id>Q9DD02-1</id>
        <name>1</name>
        <sequence type="displayed"/>
    </isoform>
    <isoform>
        <id>Q9DD02-2</id>
        <name>2</name>
        <sequence type="described" ref="VSP_043955"/>
    </isoform>
</comment>
<comment type="tissue specificity">
    <text evidence="4">Expressed in the central white matter of newborn and adult brain, particularly in regions where oligodendrocytes are generated (PubMed:26545878).</text>
</comment>
<comment type="developmental stage">
    <text evidence="3">During late gestation, it is expressed in lung epithelial cells, whereas perinatal expression is restricted to the bronchiolar epithelium.</text>
</comment>
<comment type="disruption phenotype">
    <text evidence="3">Mice display severe emphysematous enlargement of the distal respiratory sacs at birth. Club cells display enlargement and disorganization of the Golgi complex and formation of aberrant vesicular structures.</text>
</comment>
<comment type="similarity">
    <text evidence="6">Belongs to the OPI10 family.</text>
</comment>
<evidence type="ECO:0000250" key="1"/>
<evidence type="ECO:0000250" key="2">
    <source>
        <dbReference type="UniProtKB" id="Q53FT3"/>
    </source>
</evidence>
<evidence type="ECO:0000269" key="3">
    <source>
    </source>
</evidence>
<evidence type="ECO:0000269" key="4">
    <source>
    </source>
</evidence>
<evidence type="ECO:0000303" key="5">
    <source>
    </source>
</evidence>
<evidence type="ECO:0000305" key="6"/>
<evidence type="ECO:0000312" key="7">
    <source>
        <dbReference type="MGI" id="MGI:96738"/>
    </source>
</evidence>
<protein>
    <recommendedName>
        <fullName evidence="6">Protein Hikeshi</fullName>
    </recommendedName>
    <alternativeName>
        <fullName>Lethal gene on chromosome 7 Rinchik 6 protein</fullName>
    </alternativeName>
</protein>
<reference key="1">
    <citation type="journal article" date="2006" name="Genetics">
        <title>L7Rn6 encodes a novel protein required for Clara cell function in mouse lung development.</title>
        <authorList>
            <person name="Fernandez-Valdivia R."/>
            <person name="Zhang Y."/>
            <person name="Pai S."/>
            <person name="Metzker M.L."/>
            <person name="Schumacher A."/>
        </authorList>
    </citation>
    <scope>NUCLEOTIDE SEQUENCE [MRNA] (ISOFORM 1)</scope>
    <scope>POSSIBLE FUNCTION</scope>
    <scope>SUBCELLULAR LOCATION</scope>
    <scope>DEVELOPMENTAL STAGE</scope>
    <scope>DISRUPTION PHENOTYPE</scope>
</reference>
<reference key="2">
    <citation type="journal article" date="2005" name="Science">
        <title>The transcriptional landscape of the mammalian genome.</title>
        <authorList>
            <person name="Carninci P."/>
            <person name="Kasukawa T."/>
            <person name="Katayama S."/>
            <person name="Gough J."/>
            <person name="Frith M.C."/>
            <person name="Maeda N."/>
            <person name="Oyama R."/>
            <person name="Ravasi T."/>
            <person name="Lenhard B."/>
            <person name="Wells C."/>
            <person name="Kodzius R."/>
            <person name="Shimokawa K."/>
            <person name="Bajic V.B."/>
            <person name="Brenner S.E."/>
            <person name="Batalov S."/>
            <person name="Forrest A.R."/>
            <person name="Zavolan M."/>
            <person name="Davis M.J."/>
            <person name="Wilming L.G."/>
            <person name="Aidinis V."/>
            <person name="Allen J.E."/>
            <person name="Ambesi-Impiombato A."/>
            <person name="Apweiler R."/>
            <person name="Aturaliya R.N."/>
            <person name="Bailey T.L."/>
            <person name="Bansal M."/>
            <person name="Baxter L."/>
            <person name="Beisel K.W."/>
            <person name="Bersano T."/>
            <person name="Bono H."/>
            <person name="Chalk A.M."/>
            <person name="Chiu K.P."/>
            <person name="Choudhary V."/>
            <person name="Christoffels A."/>
            <person name="Clutterbuck D.R."/>
            <person name="Crowe M.L."/>
            <person name="Dalla E."/>
            <person name="Dalrymple B.P."/>
            <person name="de Bono B."/>
            <person name="Della Gatta G."/>
            <person name="di Bernardo D."/>
            <person name="Down T."/>
            <person name="Engstrom P."/>
            <person name="Fagiolini M."/>
            <person name="Faulkner G."/>
            <person name="Fletcher C.F."/>
            <person name="Fukushima T."/>
            <person name="Furuno M."/>
            <person name="Futaki S."/>
            <person name="Gariboldi M."/>
            <person name="Georgii-Hemming P."/>
            <person name="Gingeras T.R."/>
            <person name="Gojobori T."/>
            <person name="Green R.E."/>
            <person name="Gustincich S."/>
            <person name="Harbers M."/>
            <person name="Hayashi Y."/>
            <person name="Hensch T.K."/>
            <person name="Hirokawa N."/>
            <person name="Hill D."/>
            <person name="Huminiecki L."/>
            <person name="Iacono M."/>
            <person name="Ikeo K."/>
            <person name="Iwama A."/>
            <person name="Ishikawa T."/>
            <person name="Jakt M."/>
            <person name="Kanapin A."/>
            <person name="Katoh M."/>
            <person name="Kawasawa Y."/>
            <person name="Kelso J."/>
            <person name="Kitamura H."/>
            <person name="Kitano H."/>
            <person name="Kollias G."/>
            <person name="Krishnan S.P."/>
            <person name="Kruger A."/>
            <person name="Kummerfeld S.K."/>
            <person name="Kurochkin I.V."/>
            <person name="Lareau L.F."/>
            <person name="Lazarevic D."/>
            <person name="Lipovich L."/>
            <person name="Liu J."/>
            <person name="Liuni S."/>
            <person name="McWilliam S."/>
            <person name="Madan Babu M."/>
            <person name="Madera M."/>
            <person name="Marchionni L."/>
            <person name="Matsuda H."/>
            <person name="Matsuzawa S."/>
            <person name="Miki H."/>
            <person name="Mignone F."/>
            <person name="Miyake S."/>
            <person name="Morris K."/>
            <person name="Mottagui-Tabar S."/>
            <person name="Mulder N."/>
            <person name="Nakano N."/>
            <person name="Nakauchi H."/>
            <person name="Ng P."/>
            <person name="Nilsson R."/>
            <person name="Nishiguchi S."/>
            <person name="Nishikawa S."/>
            <person name="Nori F."/>
            <person name="Ohara O."/>
            <person name="Okazaki Y."/>
            <person name="Orlando V."/>
            <person name="Pang K.C."/>
            <person name="Pavan W.J."/>
            <person name="Pavesi G."/>
            <person name="Pesole G."/>
            <person name="Petrovsky N."/>
            <person name="Piazza S."/>
            <person name="Reed J."/>
            <person name="Reid J.F."/>
            <person name="Ring B.Z."/>
            <person name="Ringwald M."/>
            <person name="Rost B."/>
            <person name="Ruan Y."/>
            <person name="Salzberg S.L."/>
            <person name="Sandelin A."/>
            <person name="Schneider C."/>
            <person name="Schoenbach C."/>
            <person name="Sekiguchi K."/>
            <person name="Semple C.A."/>
            <person name="Seno S."/>
            <person name="Sessa L."/>
            <person name="Sheng Y."/>
            <person name="Shibata Y."/>
            <person name="Shimada H."/>
            <person name="Shimada K."/>
            <person name="Silva D."/>
            <person name="Sinclair B."/>
            <person name="Sperling S."/>
            <person name="Stupka E."/>
            <person name="Sugiura K."/>
            <person name="Sultana R."/>
            <person name="Takenaka Y."/>
            <person name="Taki K."/>
            <person name="Tammoja K."/>
            <person name="Tan S.L."/>
            <person name="Tang S."/>
            <person name="Taylor M.S."/>
            <person name="Tegner J."/>
            <person name="Teichmann S.A."/>
            <person name="Ueda H.R."/>
            <person name="van Nimwegen E."/>
            <person name="Verardo R."/>
            <person name="Wei C.L."/>
            <person name="Yagi K."/>
            <person name="Yamanishi H."/>
            <person name="Zabarovsky E."/>
            <person name="Zhu S."/>
            <person name="Zimmer A."/>
            <person name="Hide W."/>
            <person name="Bult C."/>
            <person name="Grimmond S.M."/>
            <person name="Teasdale R.D."/>
            <person name="Liu E.T."/>
            <person name="Brusic V."/>
            <person name="Quackenbush J."/>
            <person name="Wahlestedt C."/>
            <person name="Mattick J.S."/>
            <person name="Hume D.A."/>
            <person name="Kai C."/>
            <person name="Sasaki D."/>
            <person name="Tomaru Y."/>
            <person name="Fukuda S."/>
            <person name="Kanamori-Katayama M."/>
            <person name="Suzuki M."/>
            <person name="Aoki J."/>
            <person name="Arakawa T."/>
            <person name="Iida J."/>
            <person name="Imamura K."/>
            <person name="Itoh M."/>
            <person name="Kato T."/>
            <person name="Kawaji H."/>
            <person name="Kawagashira N."/>
            <person name="Kawashima T."/>
            <person name="Kojima M."/>
            <person name="Kondo S."/>
            <person name="Konno H."/>
            <person name="Nakano K."/>
            <person name="Ninomiya N."/>
            <person name="Nishio T."/>
            <person name="Okada M."/>
            <person name="Plessy C."/>
            <person name="Shibata K."/>
            <person name="Shiraki T."/>
            <person name="Suzuki S."/>
            <person name="Tagami M."/>
            <person name="Waki K."/>
            <person name="Watahiki A."/>
            <person name="Okamura-Oho Y."/>
            <person name="Suzuki H."/>
            <person name="Kawai J."/>
            <person name="Hayashizaki Y."/>
        </authorList>
    </citation>
    <scope>NUCLEOTIDE SEQUENCE [LARGE SCALE MRNA] (ISOFORM 1)</scope>
    <source>
        <strain>C57BL/6J</strain>
        <tissue>Kidney</tissue>
    </source>
</reference>
<reference key="3">
    <citation type="journal article" date="2009" name="PLoS Biol.">
        <title>Lineage-specific biology revealed by a finished genome assembly of the mouse.</title>
        <authorList>
            <person name="Church D.M."/>
            <person name="Goodstadt L."/>
            <person name="Hillier L.W."/>
            <person name="Zody M.C."/>
            <person name="Goldstein S."/>
            <person name="She X."/>
            <person name="Bult C.J."/>
            <person name="Agarwala R."/>
            <person name="Cherry J.L."/>
            <person name="DiCuccio M."/>
            <person name="Hlavina W."/>
            <person name="Kapustin Y."/>
            <person name="Meric P."/>
            <person name="Maglott D."/>
            <person name="Birtle Z."/>
            <person name="Marques A.C."/>
            <person name="Graves T."/>
            <person name="Zhou S."/>
            <person name="Teague B."/>
            <person name="Potamousis K."/>
            <person name="Churas C."/>
            <person name="Place M."/>
            <person name="Herschleb J."/>
            <person name="Runnheim R."/>
            <person name="Forrest D."/>
            <person name="Amos-Landgraf J."/>
            <person name="Schwartz D.C."/>
            <person name="Cheng Z."/>
            <person name="Lindblad-Toh K."/>
            <person name="Eichler E.E."/>
            <person name="Ponting C.P."/>
        </authorList>
    </citation>
    <scope>NUCLEOTIDE SEQUENCE [LARGE SCALE GENOMIC DNA]</scope>
    <source>
        <strain>C57BL/6J</strain>
    </source>
</reference>
<reference key="4">
    <citation type="journal article" date="2004" name="Genome Res.">
        <title>The status, quality, and expansion of the NIH full-length cDNA project: the Mammalian Gene Collection (MGC).</title>
        <authorList>
            <consortium name="The MGC Project Team"/>
        </authorList>
    </citation>
    <scope>NUCLEOTIDE SEQUENCE [LARGE SCALE MRNA] (ISOFORM 1)</scope>
    <source>
        <strain>FVB/N</strain>
        <tissue>Mammary tumor</tissue>
    </source>
</reference>
<reference key="5">
    <citation type="journal article" date="2010" name="Cell">
        <title>A tissue-specific atlas of mouse protein phosphorylation and expression.</title>
        <authorList>
            <person name="Huttlin E.L."/>
            <person name="Jedrychowski M.P."/>
            <person name="Elias J.E."/>
            <person name="Goswami T."/>
            <person name="Rad R."/>
            <person name="Beausoleil S.A."/>
            <person name="Villen J."/>
            <person name="Haas W."/>
            <person name="Sowa M.E."/>
            <person name="Gygi S.P."/>
        </authorList>
    </citation>
    <scope>IDENTIFICATION BY MASS SPECTROMETRY [LARGE SCALE ANALYSIS]</scope>
    <source>
        <tissue>Brain</tissue>
        <tissue>Heart</tissue>
        <tissue>Kidney</tissue>
        <tissue>Liver</tissue>
        <tissue>Lung</tissue>
        <tissue>Pancreas</tissue>
        <tissue>Spleen</tissue>
        <tissue>Testis</tissue>
    </source>
</reference>
<reference key="6">
    <citation type="journal article" date="2016" name="J. Med. Genet.">
        <title>Leukoencephalopathy and early death associated with an Ashkenazi-Jewish founder mutation in the Hikeshi gene.</title>
        <authorList>
            <person name="Edvardson S."/>
            <person name="Kose S."/>
            <person name="Jalas C."/>
            <person name="Fattal-Valevski A."/>
            <person name="Watanabe A."/>
            <person name="Ogawa Y."/>
            <person name="Mamada H."/>
            <person name="Fedick A.M."/>
            <person name="Ben-Shachar S."/>
            <person name="Treff N.R."/>
            <person name="Shaag A."/>
            <person name="Bale S."/>
            <person name="Gaertner J."/>
            <person name="Imamoto N."/>
            <person name="Elpeleg O."/>
        </authorList>
    </citation>
    <scope>TISSUE SPECIFICITY</scope>
</reference>
<organism>
    <name type="scientific">Mus musculus</name>
    <name type="common">Mouse</name>
    <dbReference type="NCBI Taxonomy" id="10090"/>
    <lineage>
        <taxon>Eukaryota</taxon>
        <taxon>Metazoa</taxon>
        <taxon>Chordata</taxon>
        <taxon>Craniata</taxon>
        <taxon>Vertebrata</taxon>
        <taxon>Euteleostomi</taxon>
        <taxon>Mammalia</taxon>
        <taxon>Eutheria</taxon>
        <taxon>Euarchontoglires</taxon>
        <taxon>Glires</taxon>
        <taxon>Rodentia</taxon>
        <taxon>Myomorpha</taxon>
        <taxon>Muroidea</taxon>
        <taxon>Muridae</taxon>
        <taxon>Murinae</taxon>
        <taxon>Mus</taxon>
        <taxon>Mus</taxon>
    </lineage>
</organism>
<accession>Q9DD02</accession>
<accession>D3YUY2</accession>
<accession>Q30C40</accession>
<accession>Q9CZT7</accession>
<name>HIKES_MOUSE</name>
<dbReference type="EMBL" id="DQ196315">
    <property type="protein sequence ID" value="ABA26460.1"/>
    <property type="molecule type" value="mRNA"/>
</dbReference>
<dbReference type="EMBL" id="DQ196316">
    <property type="protein sequence ID" value="ABA26461.1"/>
    <property type="molecule type" value="mRNA"/>
</dbReference>
<dbReference type="EMBL" id="AK002306">
    <property type="protein sequence ID" value="BAB22001.1"/>
    <property type="molecule type" value="mRNA"/>
</dbReference>
<dbReference type="EMBL" id="AK012166">
    <property type="protein sequence ID" value="BAB28072.1"/>
    <property type="molecule type" value="mRNA"/>
</dbReference>
<dbReference type="EMBL" id="AC161229">
    <property type="status" value="NOT_ANNOTATED_CDS"/>
    <property type="molecule type" value="Genomic_DNA"/>
</dbReference>
<dbReference type="EMBL" id="AC165077">
    <property type="status" value="NOT_ANNOTATED_CDS"/>
    <property type="molecule type" value="Genomic_DNA"/>
</dbReference>
<dbReference type="EMBL" id="BC003916">
    <property type="protein sequence ID" value="AAH03916.1"/>
    <property type="molecule type" value="mRNA"/>
</dbReference>
<dbReference type="CCDS" id="CCDS21445.1">
    <molecule id="Q9DD02-1"/>
</dbReference>
<dbReference type="CCDS" id="CCDS80748.1">
    <molecule id="Q9DD02-2"/>
</dbReference>
<dbReference type="RefSeq" id="NP_001278215.1">
    <property type="nucleotide sequence ID" value="NM_001291286.1"/>
</dbReference>
<dbReference type="RefSeq" id="NP_001278216.1">
    <molecule id="Q9DD02-2"/>
    <property type="nucleotide sequence ID" value="NM_001291287.2"/>
</dbReference>
<dbReference type="RefSeq" id="NP_080580.1">
    <molecule id="Q9DD02-1"/>
    <property type="nucleotide sequence ID" value="NM_026304.4"/>
</dbReference>
<dbReference type="RefSeq" id="XP_006508195.1">
    <property type="nucleotide sequence ID" value="XM_006508132.3"/>
</dbReference>
<dbReference type="RefSeq" id="XP_036009278.1">
    <molecule id="Q9DD02-2"/>
    <property type="nucleotide sequence ID" value="XM_036153385.1"/>
</dbReference>
<dbReference type="SMR" id="Q9DD02"/>
<dbReference type="BioGRID" id="212353">
    <property type="interactions" value="6"/>
</dbReference>
<dbReference type="FunCoup" id="Q9DD02">
    <property type="interactions" value="4253"/>
</dbReference>
<dbReference type="STRING" id="10090.ENSMUSP00000119806"/>
<dbReference type="iPTMnet" id="Q9DD02"/>
<dbReference type="PhosphoSitePlus" id="Q9DD02"/>
<dbReference type="jPOST" id="Q9DD02"/>
<dbReference type="PaxDb" id="10090-ENSMUSP00000119806"/>
<dbReference type="PeptideAtlas" id="Q9DD02"/>
<dbReference type="ProteomicsDB" id="273109">
    <molecule id="Q9DD02-1"/>
</dbReference>
<dbReference type="ProteomicsDB" id="273110">
    <molecule id="Q9DD02-2"/>
</dbReference>
<dbReference type="Pumba" id="Q9DD02"/>
<dbReference type="Antibodypedia" id="31443">
    <property type="antibodies" value="165 antibodies from 24 providers"/>
</dbReference>
<dbReference type="Ensembl" id="ENSMUST00000075010.12">
    <molecule id="Q9DD02-2"/>
    <property type="protein sequence ID" value="ENSMUSP00000102856.2"/>
    <property type="gene ID" value="ENSMUSG00000062797.15"/>
</dbReference>
<dbReference type="Ensembl" id="ENSMUST00000153470.9">
    <molecule id="Q9DD02-1"/>
    <property type="protein sequence ID" value="ENSMUSP00000119806.2"/>
    <property type="gene ID" value="ENSMUSG00000062797.15"/>
</dbReference>
<dbReference type="GeneID" id="67669"/>
<dbReference type="KEGG" id="mmu:67669"/>
<dbReference type="UCSC" id="uc009igh.2">
    <molecule id="Q9DD02-1"/>
    <property type="organism name" value="mouse"/>
</dbReference>
<dbReference type="AGR" id="MGI:96738"/>
<dbReference type="CTD" id="51501"/>
<dbReference type="MGI" id="MGI:96738">
    <property type="gene designation" value="Hikeshi"/>
</dbReference>
<dbReference type="VEuPathDB" id="HostDB:ENSMUSG00000062797"/>
<dbReference type="eggNOG" id="KOG4067">
    <property type="taxonomic scope" value="Eukaryota"/>
</dbReference>
<dbReference type="GeneTree" id="ENSGT00390000004056"/>
<dbReference type="HOGENOM" id="CLU_084839_2_0_1"/>
<dbReference type="InParanoid" id="Q9DD02"/>
<dbReference type="OMA" id="WWAKFER"/>
<dbReference type="OrthoDB" id="10248398at2759"/>
<dbReference type="PhylomeDB" id="Q9DD02"/>
<dbReference type="TreeFam" id="TF313222"/>
<dbReference type="Reactome" id="R-MMU-3371453">
    <property type="pathway name" value="Regulation of HSF1-mediated heat shock response"/>
</dbReference>
<dbReference type="BioGRID-ORCS" id="67669">
    <property type="hits" value="8 hits in 78 CRISPR screens"/>
</dbReference>
<dbReference type="PRO" id="PR:Q9DD02"/>
<dbReference type="Proteomes" id="UP000000589">
    <property type="component" value="Chromosome 7"/>
</dbReference>
<dbReference type="RNAct" id="Q9DD02">
    <property type="molecule type" value="protein"/>
</dbReference>
<dbReference type="Bgee" id="ENSMUSG00000062797">
    <property type="expression patterns" value="Expressed in medial ganglionic eminence and 264 other cell types or tissues"/>
</dbReference>
<dbReference type="ExpressionAtlas" id="Q9DD02">
    <property type="expression patterns" value="baseline and differential"/>
</dbReference>
<dbReference type="GO" id="GO:0005737">
    <property type="term" value="C:cytoplasm"/>
    <property type="evidence" value="ECO:0000314"/>
    <property type="project" value="MGI"/>
</dbReference>
<dbReference type="GO" id="GO:0005829">
    <property type="term" value="C:cytosol"/>
    <property type="evidence" value="ECO:0000250"/>
    <property type="project" value="UniProtKB"/>
</dbReference>
<dbReference type="GO" id="GO:0016607">
    <property type="term" value="C:nuclear speck"/>
    <property type="evidence" value="ECO:0007669"/>
    <property type="project" value="Ensembl"/>
</dbReference>
<dbReference type="GO" id="GO:0005634">
    <property type="term" value="C:nucleus"/>
    <property type="evidence" value="ECO:0000250"/>
    <property type="project" value="UniProtKB"/>
</dbReference>
<dbReference type="GO" id="GO:0030544">
    <property type="term" value="F:Hsp70 protein binding"/>
    <property type="evidence" value="ECO:0000250"/>
    <property type="project" value="UniProtKB"/>
</dbReference>
<dbReference type="GO" id="GO:0061608">
    <property type="term" value="F:nuclear import signal receptor activity"/>
    <property type="evidence" value="ECO:0007669"/>
    <property type="project" value="Ensembl"/>
</dbReference>
<dbReference type="GO" id="GO:0034605">
    <property type="term" value="P:cellular response to heat"/>
    <property type="evidence" value="ECO:0000250"/>
    <property type="project" value="UniProtKB"/>
</dbReference>
<dbReference type="GO" id="GO:0007030">
    <property type="term" value="P:Golgi organization"/>
    <property type="evidence" value="ECO:0000315"/>
    <property type="project" value="MGI"/>
</dbReference>
<dbReference type="GO" id="GO:0030324">
    <property type="term" value="P:lung development"/>
    <property type="evidence" value="ECO:0000315"/>
    <property type="project" value="MGI"/>
</dbReference>
<dbReference type="GO" id="GO:0006606">
    <property type="term" value="P:protein import into nucleus"/>
    <property type="evidence" value="ECO:0000250"/>
    <property type="project" value="UniProtKB"/>
</dbReference>
<dbReference type="GO" id="GO:0015031">
    <property type="term" value="P:protein transport"/>
    <property type="evidence" value="ECO:0000250"/>
    <property type="project" value="UniProtKB"/>
</dbReference>
<dbReference type="InterPro" id="IPR048364">
    <property type="entry name" value="Hikeshi-like_C"/>
</dbReference>
<dbReference type="InterPro" id="IPR008493">
    <property type="entry name" value="Hikeshi-like_N"/>
</dbReference>
<dbReference type="InterPro" id="IPR031318">
    <property type="entry name" value="OPI10"/>
</dbReference>
<dbReference type="PANTHER" id="PTHR12925">
    <property type="entry name" value="HIKESHI FAMILY MEMBER"/>
    <property type="match status" value="1"/>
</dbReference>
<dbReference type="PANTHER" id="PTHR12925:SF0">
    <property type="entry name" value="PROTEIN HIKESHI"/>
    <property type="match status" value="1"/>
</dbReference>
<dbReference type="Pfam" id="PF21057">
    <property type="entry name" value="Hikeshi-like_C"/>
    <property type="match status" value="1"/>
</dbReference>
<dbReference type="Pfam" id="PF05603">
    <property type="entry name" value="Hikeshi-like_N"/>
    <property type="match status" value="1"/>
</dbReference>
<proteinExistence type="evidence at protein level"/>
<sequence length="197" mass="21619">MFGCLVAGRLVQTAAQQVAEDKFVFDLPDYENINHVVVFMLGTIPFPEGMGGSVYFSYPDSNGVPVWQLLGFVTNGKPSAIFKISGLKSGEGSQHPFGAMNIVRTPSVAQIGISVELLDSLAQQTPVGSAAVSSVDSFTQFTQKMLDNFYNFASSFALSQAQMTPNPSEMFIPANVVLKWYENFQRRLAQNPLFWKT</sequence>
<keyword id="KW-0025">Alternative splicing</keyword>
<keyword id="KW-0963">Cytoplasm</keyword>
<keyword id="KW-0539">Nucleus</keyword>
<keyword id="KW-0653">Protein transport</keyword>
<keyword id="KW-1185">Reference proteome</keyword>
<keyword id="KW-0813">Transport</keyword>